<feature type="chain" id="PRO_1000198729" description="Tryptophan synthase alpha chain">
    <location>
        <begin position="1"/>
        <end position="258"/>
    </location>
</feature>
<feature type="active site" description="Proton acceptor" evidence="1">
    <location>
        <position position="52"/>
    </location>
</feature>
<feature type="active site" description="Proton acceptor" evidence="1">
    <location>
        <position position="63"/>
    </location>
</feature>
<name>TRPA_STRZT</name>
<sequence>MPKTLTKKLNAIKAAGKGIFVPYIMAGDHEKGLDGLAETIHFLEDLGVSAIEVGIPFSDPVADGPVIEEAGLRSLAHGTSTQALVETLKTIETEIPLVIMTYFNPLFQYGVENFVKDLADTAVKGLIIPDLPHEHANFVEPFLADTDIALIPLVSLTTGIERQKELIEGAEGFVYAVAINGVTGKSGNYRADLDKHLAQLHQVADIPVLTGFGVSSQADLERFNAVSDGVIVGSKIVKALHQGEPIQDFIKQAVAYQK</sequence>
<evidence type="ECO:0000255" key="1">
    <source>
        <dbReference type="HAMAP-Rule" id="MF_00131"/>
    </source>
</evidence>
<dbReference type="EC" id="4.2.1.20" evidence="1"/>
<dbReference type="EMBL" id="CP000921">
    <property type="protein sequence ID" value="ACO24199.1"/>
    <property type="molecule type" value="Genomic_DNA"/>
</dbReference>
<dbReference type="RefSeq" id="WP_001127048.1">
    <property type="nucleotide sequence ID" value="NC_012469.1"/>
</dbReference>
<dbReference type="SMR" id="C1CT50"/>
<dbReference type="KEGG" id="snt:SPT_1734"/>
<dbReference type="HOGENOM" id="CLU_016734_0_0_9"/>
<dbReference type="UniPathway" id="UPA00035">
    <property type="reaction ID" value="UER00044"/>
</dbReference>
<dbReference type="GO" id="GO:0005829">
    <property type="term" value="C:cytosol"/>
    <property type="evidence" value="ECO:0007669"/>
    <property type="project" value="TreeGrafter"/>
</dbReference>
<dbReference type="GO" id="GO:0004834">
    <property type="term" value="F:tryptophan synthase activity"/>
    <property type="evidence" value="ECO:0007669"/>
    <property type="project" value="UniProtKB-UniRule"/>
</dbReference>
<dbReference type="CDD" id="cd04724">
    <property type="entry name" value="Tryptophan_synthase_alpha"/>
    <property type="match status" value="1"/>
</dbReference>
<dbReference type="Gene3D" id="3.20.20.70">
    <property type="entry name" value="Aldolase class I"/>
    <property type="match status" value="1"/>
</dbReference>
<dbReference type="HAMAP" id="MF_00131">
    <property type="entry name" value="Trp_synth_alpha"/>
    <property type="match status" value="1"/>
</dbReference>
<dbReference type="InterPro" id="IPR013785">
    <property type="entry name" value="Aldolase_TIM"/>
</dbReference>
<dbReference type="InterPro" id="IPR011060">
    <property type="entry name" value="RibuloseP-bd_barrel"/>
</dbReference>
<dbReference type="InterPro" id="IPR018204">
    <property type="entry name" value="Trp_synthase_alpha_AS"/>
</dbReference>
<dbReference type="InterPro" id="IPR002028">
    <property type="entry name" value="Trp_synthase_suA"/>
</dbReference>
<dbReference type="NCBIfam" id="TIGR00262">
    <property type="entry name" value="trpA"/>
    <property type="match status" value="1"/>
</dbReference>
<dbReference type="PANTHER" id="PTHR43406:SF1">
    <property type="entry name" value="TRYPTOPHAN SYNTHASE ALPHA CHAIN, CHLOROPLASTIC"/>
    <property type="match status" value="1"/>
</dbReference>
<dbReference type="PANTHER" id="PTHR43406">
    <property type="entry name" value="TRYPTOPHAN SYNTHASE, ALPHA CHAIN"/>
    <property type="match status" value="1"/>
</dbReference>
<dbReference type="Pfam" id="PF00290">
    <property type="entry name" value="Trp_syntA"/>
    <property type="match status" value="1"/>
</dbReference>
<dbReference type="SUPFAM" id="SSF51366">
    <property type="entry name" value="Ribulose-phoshate binding barrel"/>
    <property type="match status" value="1"/>
</dbReference>
<dbReference type="PROSITE" id="PS00167">
    <property type="entry name" value="TRP_SYNTHASE_ALPHA"/>
    <property type="match status" value="1"/>
</dbReference>
<gene>
    <name evidence="1" type="primary">trpA</name>
    <name type="ordered locus">SPT_1734</name>
</gene>
<reference key="1">
    <citation type="journal article" date="2010" name="Genome Biol.">
        <title>Structure and dynamics of the pan-genome of Streptococcus pneumoniae and closely related species.</title>
        <authorList>
            <person name="Donati C."/>
            <person name="Hiller N.L."/>
            <person name="Tettelin H."/>
            <person name="Muzzi A."/>
            <person name="Croucher N.J."/>
            <person name="Angiuoli S.V."/>
            <person name="Oggioni M."/>
            <person name="Dunning Hotopp J.C."/>
            <person name="Hu F.Z."/>
            <person name="Riley D.R."/>
            <person name="Covacci A."/>
            <person name="Mitchell T.J."/>
            <person name="Bentley S.D."/>
            <person name="Kilian M."/>
            <person name="Ehrlich G.D."/>
            <person name="Rappuoli R."/>
            <person name="Moxon E.R."/>
            <person name="Masignani V."/>
        </authorList>
    </citation>
    <scope>NUCLEOTIDE SEQUENCE [LARGE SCALE GENOMIC DNA]</scope>
    <source>
        <strain>Taiwan19F-14</strain>
    </source>
</reference>
<comment type="function">
    <text evidence="1">The alpha subunit is responsible for the aldol cleavage of indoleglycerol phosphate to indole and glyceraldehyde 3-phosphate.</text>
</comment>
<comment type="catalytic activity">
    <reaction evidence="1">
        <text>(1S,2R)-1-C-(indol-3-yl)glycerol 3-phosphate + L-serine = D-glyceraldehyde 3-phosphate + L-tryptophan + H2O</text>
        <dbReference type="Rhea" id="RHEA:10532"/>
        <dbReference type="ChEBI" id="CHEBI:15377"/>
        <dbReference type="ChEBI" id="CHEBI:33384"/>
        <dbReference type="ChEBI" id="CHEBI:57912"/>
        <dbReference type="ChEBI" id="CHEBI:58866"/>
        <dbReference type="ChEBI" id="CHEBI:59776"/>
        <dbReference type="EC" id="4.2.1.20"/>
    </reaction>
</comment>
<comment type="pathway">
    <text evidence="1">Amino-acid biosynthesis; L-tryptophan biosynthesis; L-tryptophan from chorismate: step 5/5.</text>
</comment>
<comment type="subunit">
    <text evidence="1">Tetramer of two alpha and two beta chains.</text>
</comment>
<comment type="similarity">
    <text evidence="1">Belongs to the TrpA family.</text>
</comment>
<proteinExistence type="inferred from homology"/>
<organism>
    <name type="scientific">Streptococcus pneumoniae (strain Taiwan19F-14)</name>
    <dbReference type="NCBI Taxonomy" id="487213"/>
    <lineage>
        <taxon>Bacteria</taxon>
        <taxon>Bacillati</taxon>
        <taxon>Bacillota</taxon>
        <taxon>Bacilli</taxon>
        <taxon>Lactobacillales</taxon>
        <taxon>Streptococcaceae</taxon>
        <taxon>Streptococcus</taxon>
    </lineage>
</organism>
<accession>C1CT50</accession>
<keyword id="KW-0028">Amino-acid biosynthesis</keyword>
<keyword id="KW-0057">Aromatic amino acid biosynthesis</keyword>
<keyword id="KW-0456">Lyase</keyword>
<keyword id="KW-0822">Tryptophan biosynthesis</keyword>
<protein>
    <recommendedName>
        <fullName evidence="1">Tryptophan synthase alpha chain</fullName>
        <ecNumber evidence="1">4.2.1.20</ecNumber>
    </recommendedName>
</protein>